<comment type="catalytic activity">
    <reaction evidence="1">
        <text>1-(5-phospho-beta-D-ribosyl)-5-[(5-phospho-beta-D-ribosylamino)methylideneamino]imidazole-4-carboxamide = 5-[(5-phospho-1-deoxy-D-ribulos-1-ylimino)methylamino]-1-(5-phospho-beta-D-ribosyl)imidazole-4-carboxamide</text>
        <dbReference type="Rhea" id="RHEA:15469"/>
        <dbReference type="ChEBI" id="CHEBI:58435"/>
        <dbReference type="ChEBI" id="CHEBI:58525"/>
        <dbReference type="EC" id="5.3.1.16"/>
    </reaction>
</comment>
<comment type="pathway">
    <text evidence="1">Amino-acid biosynthesis; L-histidine biosynthesis; L-histidine from 5-phospho-alpha-D-ribose 1-diphosphate: step 4/9.</text>
</comment>
<comment type="subcellular location">
    <subcellularLocation>
        <location evidence="1">Cytoplasm</location>
    </subcellularLocation>
</comment>
<comment type="similarity">
    <text evidence="1">Belongs to the HisA/HisF family.</text>
</comment>
<dbReference type="EC" id="5.3.1.16" evidence="1"/>
<dbReference type="EMBL" id="CP000488">
    <property type="protein sequence ID" value="ABL02684.1"/>
    <property type="molecule type" value="Genomic_DNA"/>
</dbReference>
<dbReference type="RefSeq" id="WP_011738309.1">
    <property type="nucleotide sequence ID" value="NC_008610.1"/>
</dbReference>
<dbReference type="SMR" id="A1AXM7"/>
<dbReference type="STRING" id="413404.Rmag_0977"/>
<dbReference type="KEGG" id="rma:Rmag_0977"/>
<dbReference type="eggNOG" id="COG0106">
    <property type="taxonomic scope" value="Bacteria"/>
</dbReference>
<dbReference type="HOGENOM" id="CLU_048577_1_1_6"/>
<dbReference type="OrthoDB" id="9807749at2"/>
<dbReference type="UniPathway" id="UPA00031">
    <property type="reaction ID" value="UER00009"/>
</dbReference>
<dbReference type="Proteomes" id="UP000002587">
    <property type="component" value="Chromosome"/>
</dbReference>
<dbReference type="GO" id="GO:0005737">
    <property type="term" value="C:cytoplasm"/>
    <property type="evidence" value="ECO:0007669"/>
    <property type="project" value="UniProtKB-SubCell"/>
</dbReference>
<dbReference type="GO" id="GO:0003949">
    <property type="term" value="F:1-(5-phosphoribosyl)-5-[(5-phosphoribosylamino)methylideneamino]imidazole-4-carboxamide isomerase activity"/>
    <property type="evidence" value="ECO:0007669"/>
    <property type="project" value="UniProtKB-UniRule"/>
</dbReference>
<dbReference type="GO" id="GO:0000105">
    <property type="term" value="P:L-histidine biosynthetic process"/>
    <property type="evidence" value="ECO:0007669"/>
    <property type="project" value="UniProtKB-UniRule"/>
</dbReference>
<dbReference type="GO" id="GO:0000162">
    <property type="term" value="P:L-tryptophan biosynthetic process"/>
    <property type="evidence" value="ECO:0007669"/>
    <property type="project" value="TreeGrafter"/>
</dbReference>
<dbReference type="CDD" id="cd04732">
    <property type="entry name" value="HisA"/>
    <property type="match status" value="1"/>
</dbReference>
<dbReference type="FunFam" id="3.20.20.70:FF:000009">
    <property type="entry name" value="1-(5-phosphoribosyl)-5-[(5-phosphoribosylamino)methylideneamino] imidazole-4-carboxamide isomerase"/>
    <property type="match status" value="1"/>
</dbReference>
<dbReference type="Gene3D" id="3.20.20.70">
    <property type="entry name" value="Aldolase class I"/>
    <property type="match status" value="1"/>
</dbReference>
<dbReference type="HAMAP" id="MF_01014">
    <property type="entry name" value="HisA"/>
    <property type="match status" value="1"/>
</dbReference>
<dbReference type="InterPro" id="IPR013785">
    <property type="entry name" value="Aldolase_TIM"/>
</dbReference>
<dbReference type="InterPro" id="IPR006062">
    <property type="entry name" value="His_biosynth"/>
</dbReference>
<dbReference type="InterPro" id="IPR006063">
    <property type="entry name" value="HisA_bact_arch"/>
</dbReference>
<dbReference type="InterPro" id="IPR044524">
    <property type="entry name" value="Isoase_HisA-like"/>
</dbReference>
<dbReference type="InterPro" id="IPR023016">
    <property type="entry name" value="Isoase_HisA-like_bact"/>
</dbReference>
<dbReference type="InterPro" id="IPR011060">
    <property type="entry name" value="RibuloseP-bd_barrel"/>
</dbReference>
<dbReference type="NCBIfam" id="TIGR00007">
    <property type="entry name" value="1-(5-phosphoribosyl)-5-[(5-phosphoribosylamino)methylideneamino]imidazole-4-carboxamide isomerase"/>
    <property type="match status" value="1"/>
</dbReference>
<dbReference type="NCBIfam" id="NF010112">
    <property type="entry name" value="PRK13585.1"/>
    <property type="match status" value="1"/>
</dbReference>
<dbReference type="PANTHER" id="PTHR43090">
    <property type="entry name" value="1-(5-PHOSPHORIBOSYL)-5-[(5-PHOSPHORIBOSYLAMINO)METHYLIDENEAMINO] IMIDAZOLE-4-CARBOXAMIDE ISOMERASE"/>
    <property type="match status" value="1"/>
</dbReference>
<dbReference type="PANTHER" id="PTHR43090:SF2">
    <property type="entry name" value="1-(5-PHOSPHORIBOSYL)-5-[(5-PHOSPHORIBOSYLAMINO)METHYLIDENEAMINO] IMIDAZOLE-4-CARBOXAMIDE ISOMERASE"/>
    <property type="match status" value="1"/>
</dbReference>
<dbReference type="Pfam" id="PF00977">
    <property type="entry name" value="His_biosynth"/>
    <property type="match status" value="1"/>
</dbReference>
<dbReference type="SUPFAM" id="SSF51366">
    <property type="entry name" value="Ribulose-phoshate binding barrel"/>
    <property type="match status" value="1"/>
</dbReference>
<keyword id="KW-0028">Amino-acid biosynthesis</keyword>
<keyword id="KW-0963">Cytoplasm</keyword>
<keyword id="KW-0368">Histidine biosynthesis</keyword>
<keyword id="KW-0413">Isomerase</keyword>
<sequence>MIVIPAIDLKNGQCVRLRQGLMEDTTVFSDSPVEMAEQWVKQGARRVHLVDLNGAFEGRPVNVSSVTEVVSAFPDLPVQIGGGIRNMQIANAYIEAGIDYLIIGTMAVTNPEFVSELCREFPSKVIVGLDANDGLVATQGWTQQTDLNVVNLSKKFEQYGVSSIVYTDIARDGMMQGVNIEATVDLAKQTSIPIIASGGISNMEDIFGLLVEAHHGIMGAIIGRAIYEGTLDFKQAQQFCDAN</sequence>
<name>HIS4_RUTMC</name>
<proteinExistence type="inferred from homology"/>
<reference key="1">
    <citation type="journal article" date="2007" name="Science">
        <title>The Calyptogena magnifica chemoautotrophic symbiont genome.</title>
        <authorList>
            <person name="Newton I.L.G."/>
            <person name="Woyke T."/>
            <person name="Auchtung T.A."/>
            <person name="Dilly G.F."/>
            <person name="Dutton R.J."/>
            <person name="Fisher M.C."/>
            <person name="Fontanez K.M."/>
            <person name="Lau E."/>
            <person name="Stewart F.J."/>
            <person name="Richardson P.M."/>
            <person name="Barry K.W."/>
            <person name="Saunders E."/>
            <person name="Detter J.C."/>
            <person name="Wu D."/>
            <person name="Eisen J.A."/>
            <person name="Cavanaugh C.M."/>
        </authorList>
    </citation>
    <scope>NUCLEOTIDE SEQUENCE [LARGE SCALE GENOMIC DNA]</scope>
</reference>
<organism>
    <name type="scientific">Ruthia magnifica subsp. Calyptogena magnifica</name>
    <dbReference type="NCBI Taxonomy" id="413404"/>
    <lineage>
        <taxon>Bacteria</taxon>
        <taxon>Pseudomonadati</taxon>
        <taxon>Pseudomonadota</taxon>
        <taxon>Gammaproteobacteria</taxon>
        <taxon>Candidatus Pseudothioglobaceae</taxon>
        <taxon>Candidatus Ruthturnera</taxon>
    </lineage>
</organism>
<feature type="chain" id="PRO_0000290530" description="1-(5-phosphoribosyl)-5-[(5-phosphoribosylamino)methylideneamino] imidazole-4-carboxamide isomerase">
    <location>
        <begin position="1"/>
        <end position="243"/>
    </location>
</feature>
<feature type="active site" description="Proton acceptor" evidence="1">
    <location>
        <position position="8"/>
    </location>
</feature>
<feature type="active site" description="Proton donor" evidence="1">
    <location>
        <position position="130"/>
    </location>
</feature>
<protein>
    <recommendedName>
        <fullName evidence="1">1-(5-phosphoribosyl)-5-[(5-phosphoribosylamino)methylideneamino] imidazole-4-carboxamide isomerase</fullName>
        <ecNumber evidence="1">5.3.1.16</ecNumber>
    </recommendedName>
    <alternativeName>
        <fullName evidence="1">Phosphoribosylformimino-5-aminoimidazole carboxamide ribotide isomerase</fullName>
    </alternativeName>
</protein>
<evidence type="ECO:0000255" key="1">
    <source>
        <dbReference type="HAMAP-Rule" id="MF_01014"/>
    </source>
</evidence>
<accession>A1AXM7</accession>
<gene>
    <name evidence="1" type="primary">hisA</name>
    <name type="ordered locus">Rmag_0977</name>
</gene>